<reference key="1">
    <citation type="journal article" date="2004" name="J. Biol. Chem.">
        <title>Cloning and characterization of the acid lipase from castor beans.</title>
        <authorList>
            <person name="Eastmond P.J."/>
        </authorList>
    </citation>
    <scope>NUCLEOTIDE SEQUENCE [MRNA]</scope>
    <scope>IDENTIFICATION BY MASS SPECTROMETRY</scope>
    <scope>FUNCTION</scope>
    <scope>CATALYTIC ACTIVITY</scope>
    <scope>BIOPHYSICOCHEMICAL PROPERTIES</scope>
    <scope>DEVELOPMENTAL STAGE</scope>
    <scope>SUBCELLULAR LOCATION</scope>
</reference>
<reference key="2">
    <citation type="submission" date="2012-04" db="EMBL/GenBank/DDBJ databases">
        <title>Characterization of triacylglycerol acidic lipases expressed during castor (Ricinus communis L.) seed germination.</title>
        <authorList>
            <person name="Venegas-Caleron M."/>
            <person name="Garces R."/>
            <person name="Martinez-Force E."/>
        </authorList>
    </citation>
    <scope>NUCLEOTIDE SEQUENCE [MRNA]</scope>
</reference>
<reference key="3">
    <citation type="journal article" date="2010" name="Nat. Biotechnol.">
        <title>Draft genome sequence of the oilseed species Ricinus communis.</title>
        <authorList>
            <person name="Chan A.P."/>
            <person name="Crabtree J."/>
            <person name="Zhao Q."/>
            <person name="Lorenzi H."/>
            <person name="Orvis J."/>
            <person name="Puiu D."/>
            <person name="Melake-Berhan A."/>
            <person name="Jones K.M."/>
            <person name="Redman J."/>
            <person name="Chen G."/>
            <person name="Cahoon E.B."/>
            <person name="Gedil M."/>
            <person name="Stanke M."/>
            <person name="Haas B.J."/>
            <person name="Wortman J.R."/>
            <person name="Fraser-Liggett C.M."/>
            <person name="Ravel J."/>
            <person name="Rabinowicz P.D."/>
        </authorList>
    </citation>
    <scope>NUCLEOTIDE SEQUENCE [LARGE SCALE GENOMIC DNA]</scope>
    <source>
        <strain>cv. Hale</strain>
    </source>
</reference>
<accession>Q5VKJ7</accession>
<gene>
    <name evidence="5" type="primary">OBL1</name>
    <name evidence="7" type="ORF">RCOM_1098580</name>
</gene>
<organism>
    <name type="scientific">Ricinus communis</name>
    <name type="common">Castor bean</name>
    <dbReference type="NCBI Taxonomy" id="3988"/>
    <lineage>
        <taxon>Eukaryota</taxon>
        <taxon>Viridiplantae</taxon>
        <taxon>Streptophyta</taxon>
        <taxon>Embryophyta</taxon>
        <taxon>Tracheophyta</taxon>
        <taxon>Spermatophyta</taxon>
        <taxon>Magnoliopsida</taxon>
        <taxon>eudicotyledons</taxon>
        <taxon>Gunneridae</taxon>
        <taxon>Pentapetalae</taxon>
        <taxon>rosids</taxon>
        <taxon>fabids</taxon>
        <taxon>Malpighiales</taxon>
        <taxon>Euphorbiaceae</taxon>
        <taxon>Acalyphoideae</taxon>
        <taxon>Acalypheae</taxon>
        <taxon>Ricinus</taxon>
    </lineage>
</organism>
<sequence length="526" mass="59627">MDDAGKITSTSHLIVSPDEGTFLDLFKHIVLSDLGSGAKFFRASDQRVPATAAYYSRWPVSVFICKILQLFQMPAAMLGHLTDFLLNFYYQNHGFLGILRNIFLIRLKIPKRGEADFISTIGYLDSRMDLHGTPMVSHQADEVISNADNPSLKEGHNSKIKGALGNRSLMDLCIMASKLAYENTKVVERVVAEHWKMHFVADYGGMNYFQDARNTHAFIFCDKPKDANLIVISFRGTGPFSIPNWCTDFDFSLVGLGDAGSVHVGFLEAMGLGHRNSISSFETSINTKSPGSITELRKESEMAPDHLVWAYDGVYFLAASTLKGLLKDHKNAKFVVTGHSLGGALAILFTCILEIQQETEVLDRLLNVYTFGQPRIGNYNLGYFMQNRLNFPERRYFRVVYCNDMVPRVPFDDVFFTFEHFGTCIYYDSRFFGYFTKEEPSRNPFGIENAISAHITAWWELWRSFILNHVYGAEYKETWESRMFRILGLFLPGVAAHSPVNYVNSVRLGRELAIPLMSLKMMAQGY</sequence>
<keyword id="KW-0378">Hydrolase</keyword>
<keyword id="KW-0442">Lipid degradation</keyword>
<keyword id="KW-0443">Lipid metabolism</keyword>
<keyword id="KW-0472">Membrane</keyword>
<keyword id="KW-1185">Reference proteome</keyword>
<keyword id="KW-0812">Transmembrane</keyword>
<keyword id="KW-1133">Transmembrane helix</keyword>
<dbReference type="EC" id="3.1.1.3" evidence="4"/>
<dbReference type="EMBL" id="AY360220">
    <property type="protein sequence ID" value="AAR15173.1"/>
    <property type="molecule type" value="mRNA"/>
</dbReference>
<dbReference type="EMBL" id="JQ945176">
    <property type="protein sequence ID" value="AFQ93680.1"/>
    <property type="molecule type" value="mRNA"/>
</dbReference>
<dbReference type="EMBL" id="EQ974603">
    <property type="protein sequence ID" value="EEF28563.1"/>
    <property type="molecule type" value="Genomic_DNA"/>
</dbReference>
<dbReference type="RefSeq" id="NP_001310695.1">
    <property type="nucleotide sequence ID" value="NM_001323766.1"/>
</dbReference>
<dbReference type="SMR" id="Q5VKJ7"/>
<dbReference type="STRING" id="3988.Q5VKJ7"/>
<dbReference type="ESTHER" id="ricco-q5vkj7">
    <property type="family name" value="Triacylglycerol-lipase-OBL1-like"/>
</dbReference>
<dbReference type="GeneID" id="8284735"/>
<dbReference type="KEGG" id="rcu:8284735"/>
<dbReference type="eggNOG" id="KOG4569">
    <property type="taxonomic scope" value="Eukaryota"/>
</dbReference>
<dbReference type="InParanoid" id="Q5VKJ7"/>
<dbReference type="OMA" id="DARNTHA"/>
<dbReference type="OrthoDB" id="438440at2759"/>
<dbReference type="BRENDA" id="3.1.1.3">
    <property type="organism ID" value="1204"/>
</dbReference>
<dbReference type="Proteomes" id="UP000008311">
    <property type="component" value="Unassembled WGS sequence"/>
</dbReference>
<dbReference type="GO" id="GO:0016020">
    <property type="term" value="C:membrane"/>
    <property type="evidence" value="ECO:0007669"/>
    <property type="project" value="UniProtKB-SubCell"/>
</dbReference>
<dbReference type="GO" id="GO:0004806">
    <property type="term" value="F:triacylglycerol lipase activity"/>
    <property type="evidence" value="ECO:0007669"/>
    <property type="project" value="UniProtKB-EC"/>
</dbReference>
<dbReference type="GO" id="GO:0016042">
    <property type="term" value="P:lipid catabolic process"/>
    <property type="evidence" value="ECO:0007669"/>
    <property type="project" value="UniProtKB-KW"/>
</dbReference>
<dbReference type="CDD" id="cd00519">
    <property type="entry name" value="Lipase_3"/>
    <property type="match status" value="1"/>
</dbReference>
<dbReference type="Gene3D" id="3.40.50.1820">
    <property type="entry name" value="alpha/beta hydrolase"/>
    <property type="match status" value="1"/>
</dbReference>
<dbReference type="InterPro" id="IPR029058">
    <property type="entry name" value="AB_hydrolase_fold"/>
</dbReference>
<dbReference type="InterPro" id="IPR002921">
    <property type="entry name" value="Fungal_lipase-type"/>
</dbReference>
<dbReference type="InterPro" id="IPR044819">
    <property type="entry name" value="OBL-like"/>
</dbReference>
<dbReference type="PANTHER" id="PTHR46086">
    <property type="entry name" value="ALPHA/BETA-HYDROLASES SUPERFAMILY PROTEIN"/>
    <property type="match status" value="1"/>
</dbReference>
<dbReference type="PANTHER" id="PTHR46086:SF25">
    <property type="entry name" value="TRIACYLGLYCEROL LIPASE OBL1"/>
    <property type="match status" value="1"/>
</dbReference>
<dbReference type="Pfam" id="PF01764">
    <property type="entry name" value="Lipase_3"/>
    <property type="match status" value="1"/>
</dbReference>
<dbReference type="SUPFAM" id="SSF53474">
    <property type="entry name" value="alpha/beta-Hydrolases"/>
    <property type="match status" value="1"/>
</dbReference>
<feature type="chain" id="PRO_0000450284" description="Triacylglycerol lipase OBL1">
    <location>
        <begin position="1"/>
        <end position="526"/>
    </location>
</feature>
<feature type="transmembrane region" description="Helical" evidence="3">
    <location>
        <begin position="79"/>
        <end position="99"/>
    </location>
</feature>
<feature type="short sequence motif" description="GXSXG" evidence="1">
    <location>
        <begin position="338"/>
        <end position="342"/>
    </location>
</feature>
<feature type="active site" description="Nucleophile" evidence="1">
    <location>
        <position position="340"/>
    </location>
</feature>
<feature type="active site" description="Charge relay system" evidence="2">
    <location>
        <position position="404"/>
    </location>
</feature>
<feature type="active site" description="Charge relay system" evidence="2">
    <location>
        <position position="497"/>
    </location>
</feature>
<comment type="function">
    <text evidence="4">Acid lipase that can hydrolyze a range of triacylglycerols but is not active on phospholipids (PubMed:15322116). In vitro, hydrolyzes triolein, trilinolein, triricinolein, tripalmitin, trilaurin and tricaprin (PubMed:15322116). May play a role in the regulation of lipolysis in germinating seeds (PubMed:15322116).</text>
</comment>
<comment type="catalytic activity">
    <reaction evidence="4">
        <text>a triacylglycerol + H2O = a diacylglycerol + a fatty acid + H(+)</text>
        <dbReference type="Rhea" id="RHEA:12044"/>
        <dbReference type="ChEBI" id="CHEBI:15377"/>
        <dbReference type="ChEBI" id="CHEBI:15378"/>
        <dbReference type="ChEBI" id="CHEBI:17855"/>
        <dbReference type="ChEBI" id="CHEBI:18035"/>
        <dbReference type="ChEBI" id="CHEBI:28868"/>
        <dbReference type="EC" id="3.1.1.3"/>
    </reaction>
    <physiologicalReaction direction="left-to-right" evidence="4">
        <dbReference type="Rhea" id="RHEA:12045"/>
    </physiologicalReaction>
</comment>
<comment type="biophysicochemical properties">
    <phDependence>
        <text evidence="4">Optimum pH is 4-4.5.</text>
    </phDependence>
</comment>
<comment type="subcellular location">
    <subcellularLocation>
        <location evidence="3">Membrane</location>
        <topology evidence="3">Single-pass membrane protein</topology>
    </subcellularLocation>
    <text evidence="4">Associates with the oil body membrane in seed endosperm.</text>
</comment>
<comment type="developmental stage">
    <text evidence="4">Expressed in dry seeds and germinating seeds until 4 days after soaking (at protein level).</text>
</comment>
<comment type="similarity">
    <text evidence="6">Belongs to the AB hydrolase superfamily. Lipase family.</text>
</comment>
<name>OBL1_RICCO</name>
<protein>
    <recommendedName>
        <fullName evidence="6">Triacylglycerol lipase OBL1</fullName>
        <ecNumber evidence="4">3.1.1.3</ecNumber>
    </recommendedName>
    <alternativeName>
        <fullName evidence="5">Oil body lipase 1</fullName>
        <shortName evidence="5">RcOBL1</shortName>
    </alternativeName>
    <alternativeName>
        <fullName evidence="5">Triacylglycerol acidic lipase OBL1</fullName>
    </alternativeName>
</protein>
<proteinExistence type="evidence at protein level"/>
<evidence type="ECO:0000250" key="1">
    <source>
        <dbReference type="UniProtKB" id="F4JFU8"/>
    </source>
</evidence>
<evidence type="ECO:0000250" key="2">
    <source>
        <dbReference type="UniProtKB" id="Q948R1"/>
    </source>
</evidence>
<evidence type="ECO:0000255" key="3"/>
<evidence type="ECO:0000269" key="4">
    <source>
    </source>
</evidence>
<evidence type="ECO:0000303" key="5">
    <source>
    </source>
</evidence>
<evidence type="ECO:0000305" key="6"/>
<evidence type="ECO:0000312" key="7">
    <source>
        <dbReference type="EMBL" id="EEF28563.1"/>
    </source>
</evidence>